<name>CH10_PSEU2</name>
<evidence type="ECO:0000255" key="1">
    <source>
        <dbReference type="HAMAP-Rule" id="MF_00580"/>
    </source>
</evidence>
<sequence length="97" mass="10268">MKLRPLHDRVVIRRSEEETKTAGGIVLPGSAAEKPNRGEIVAVGTGRVLDNGEVRALAVKVGDKVVFGPYSGSNTVKVDGEDLLVMSENEILAVVEG</sequence>
<gene>
    <name evidence="1" type="primary">groES</name>
    <name evidence="1" type="synonym">groS</name>
    <name type="ordered locus">Psyr_4073</name>
</gene>
<comment type="function">
    <text evidence="1">Together with the chaperonin GroEL, plays an essential role in assisting protein folding. The GroEL-GroES system forms a nano-cage that allows encapsulation of the non-native substrate proteins and provides a physical environment optimized to promote and accelerate protein folding. GroES binds to the apical surface of the GroEL ring, thereby capping the opening of the GroEL channel.</text>
</comment>
<comment type="subunit">
    <text evidence="1">Heptamer of 7 subunits arranged in a ring. Interacts with the chaperonin GroEL.</text>
</comment>
<comment type="subcellular location">
    <subcellularLocation>
        <location evidence="1">Cytoplasm</location>
    </subcellularLocation>
</comment>
<comment type="similarity">
    <text evidence="1">Belongs to the GroES chaperonin family.</text>
</comment>
<accession>Q4ZP19</accession>
<keyword id="KW-0143">Chaperone</keyword>
<keyword id="KW-0963">Cytoplasm</keyword>
<dbReference type="EMBL" id="CP000075">
    <property type="protein sequence ID" value="AAY39103.1"/>
    <property type="molecule type" value="Genomic_DNA"/>
</dbReference>
<dbReference type="RefSeq" id="WP_003304675.1">
    <property type="nucleotide sequence ID" value="NC_007005.1"/>
</dbReference>
<dbReference type="RefSeq" id="YP_237141.1">
    <property type="nucleotide sequence ID" value="NC_007005.1"/>
</dbReference>
<dbReference type="SMR" id="Q4ZP19"/>
<dbReference type="STRING" id="205918.Psyr_4073"/>
<dbReference type="KEGG" id="psb:Psyr_4073"/>
<dbReference type="PATRIC" id="fig|205918.7.peg.4192"/>
<dbReference type="eggNOG" id="COG0234">
    <property type="taxonomic scope" value="Bacteria"/>
</dbReference>
<dbReference type="HOGENOM" id="CLU_132825_2_0_6"/>
<dbReference type="OrthoDB" id="9806791at2"/>
<dbReference type="Proteomes" id="UP000000426">
    <property type="component" value="Chromosome"/>
</dbReference>
<dbReference type="GO" id="GO:0005737">
    <property type="term" value="C:cytoplasm"/>
    <property type="evidence" value="ECO:0007669"/>
    <property type="project" value="UniProtKB-SubCell"/>
</dbReference>
<dbReference type="GO" id="GO:0005524">
    <property type="term" value="F:ATP binding"/>
    <property type="evidence" value="ECO:0007669"/>
    <property type="project" value="InterPro"/>
</dbReference>
<dbReference type="GO" id="GO:0046872">
    <property type="term" value="F:metal ion binding"/>
    <property type="evidence" value="ECO:0007669"/>
    <property type="project" value="TreeGrafter"/>
</dbReference>
<dbReference type="GO" id="GO:0044183">
    <property type="term" value="F:protein folding chaperone"/>
    <property type="evidence" value="ECO:0007669"/>
    <property type="project" value="InterPro"/>
</dbReference>
<dbReference type="GO" id="GO:0051087">
    <property type="term" value="F:protein-folding chaperone binding"/>
    <property type="evidence" value="ECO:0007669"/>
    <property type="project" value="TreeGrafter"/>
</dbReference>
<dbReference type="GO" id="GO:0051082">
    <property type="term" value="F:unfolded protein binding"/>
    <property type="evidence" value="ECO:0007669"/>
    <property type="project" value="TreeGrafter"/>
</dbReference>
<dbReference type="GO" id="GO:0051085">
    <property type="term" value="P:chaperone cofactor-dependent protein refolding"/>
    <property type="evidence" value="ECO:0007669"/>
    <property type="project" value="TreeGrafter"/>
</dbReference>
<dbReference type="CDD" id="cd00320">
    <property type="entry name" value="cpn10"/>
    <property type="match status" value="1"/>
</dbReference>
<dbReference type="FunFam" id="2.30.33.40:FF:000001">
    <property type="entry name" value="10 kDa chaperonin"/>
    <property type="match status" value="1"/>
</dbReference>
<dbReference type="Gene3D" id="2.30.33.40">
    <property type="entry name" value="GroES chaperonin"/>
    <property type="match status" value="1"/>
</dbReference>
<dbReference type="HAMAP" id="MF_00580">
    <property type="entry name" value="CH10"/>
    <property type="match status" value="1"/>
</dbReference>
<dbReference type="InterPro" id="IPR020818">
    <property type="entry name" value="Chaperonin_GroES"/>
</dbReference>
<dbReference type="InterPro" id="IPR037124">
    <property type="entry name" value="Chaperonin_GroES_sf"/>
</dbReference>
<dbReference type="InterPro" id="IPR018369">
    <property type="entry name" value="Chaprnonin_Cpn10_CS"/>
</dbReference>
<dbReference type="InterPro" id="IPR011032">
    <property type="entry name" value="GroES-like_sf"/>
</dbReference>
<dbReference type="NCBIfam" id="NF001526">
    <property type="entry name" value="PRK00364.1-1"/>
    <property type="match status" value="1"/>
</dbReference>
<dbReference type="NCBIfam" id="NF001527">
    <property type="entry name" value="PRK00364.1-2"/>
    <property type="match status" value="1"/>
</dbReference>
<dbReference type="NCBIfam" id="NF001531">
    <property type="entry name" value="PRK00364.2-2"/>
    <property type="match status" value="1"/>
</dbReference>
<dbReference type="NCBIfam" id="NF001533">
    <property type="entry name" value="PRK00364.2-4"/>
    <property type="match status" value="1"/>
</dbReference>
<dbReference type="PANTHER" id="PTHR10772">
    <property type="entry name" value="10 KDA HEAT SHOCK PROTEIN"/>
    <property type="match status" value="1"/>
</dbReference>
<dbReference type="PANTHER" id="PTHR10772:SF58">
    <property type="entry name" value="CO-CHAPERONIN GROES"/>
    <property type="match status" value="1"/>
</dbReference>
<dbReference type="Pfam" id="PF00166">
    <property type="entry name" value="Cpn10"/>
    <property type="match status" value="1"/>
</dbReference>
<dbReference type="PRINTS" id="PR00297">
    <property type="entry name" value="CHAPERONIN10"/>
</dbReference>
<dbReference type="SMART" id="SM00883">
    <property type="entry name" value="Cpn10"/>
    <property type="match status" value="1"/>
</dbReference>
<dbReference type="SUPFAM" id="SSF50129">
    <property type="entry name" value="GroES-like"/>
    <property type="match status" value="1"/>
</dbReference>
<dbReference type="PROSITE" id="PS00681">
    <property type="entry name" value="CHAPERONINS_CPN10"/>
    <property type="match status" value="1"/>
</dbReference>
<protein>
    <recommendedName>
        <fullName evidence="1">Co-chaperonin GroES</fullName>
    </recommendedName>
    <alternativeName>
        <fullName evidence="1">10 kDa chaperonin</fullName>
    </alternativeName>
    <alternativeName>
        <fullName evidence="1">Chaperonin-10</fullName>
        <shortName evidence="1">Cpn10</shortName>
    </alternativeName>
</protein>
<organism>
    <name type="scientific">Pseudomonas syringae pv. syringae (strain B728a)</name>
    <dbReference type="NCBI Taxonomy" id="205918"/>
    <lineage>
        <taxon>Bacteria</taxon>
        <taxon>Pseudomonadati</taxon>
        <taxon>Pseudomonadota</taxon>
        <taxon>Gammaproteobacteria</taxon>
        <taxon>Pseudomonadales</taxon>
        <taxon>Pseudomonadaceae</taxon>
        <taxon>Pseudomonas</taxon>
        <taxon>Pseudomonas syringae</taxon>
    </lineage>
</organism>
<feature type="chain" id="PRO_1000025340" description="Co-chaperonin GroES">
    <location>
        <begin position="1"/>
        <end position="97"/>
    </location>
</feature>
<reference key="1">
    <citation type="journal article" date="2005" name="Proc. Natl. Acad. Sci. U.S.A.">
        <title>Comparison of the complete genome sequences of Pseudomonas syringae pv. syringae B728a and pv. tomato DC3000.</title>
        <authorList>
            <person name="Feil H."/>
            <person name="Feil W.S."/>
            <person name="Chain P."/>
            <person name="Larimer F."/>
            <person name="Dibartolo G."/>
            <person name="Copeland A."/>
            <person name="Lykidis A."/>
            <person name="Trong S."/>
            <person name="Nolan M."/>
            <person name="Goltsman E."/>
            <person name="Thiel J."/>
            <person name="Malfatti S."/>
            <person name="Loper J.E."/>
            <person name="Lapidus A."/>
            <person name="Detter J.C."/>
            <person name="Land M."/>
            <person name="Richardson P.M."/>
            <person name="Kyrpides N.C."/>
            <person name="Ivanova N."/>
            <person name="Lindow S.E."/>
        </authorList>
    </citation>
    <scope>NUCLEOTIDE SEQUENCE [LARGE SCALE GENOMIC DNA]</scope>
    <source>
        <strain>B728a</strain>
    </source>
</reference>
<proteinExistence type="inferred from homology"/>